<gene>
    <name evidence="1" type="primary">dphB</name>
    <name type="ordered locus">rrnAC1406</name>
</gene>
<evidence type="ECO:0000255" key="1">
    <source>
        <dbReference type="HAMAP-Rule" id="MF_01084"/>
    </source>
</evidence>
<protein>
    <recommendedName>
        <fullName evidence="1">Diphthine synthase</fullName>
        <ecNumber evidence="1">2.1.1.98</ecNumber>
    </recommendedName>
    <alternativeName>
        <fullName evidence="1">Diphthamide biosynthesis methyltransferase</fullName>
    </alternativeName>
</protein>
<comment type="function">
    <text evidence="1">S-adenosyl-L-methionine-dependent methyltransferase that catalyzes the trimethylation of the amino group of the modified target histidine residue in translation elongation factor 2 (EF-2), to form an intermediate called diphthine. The three successive methylation reactions represent the second step of diphthamide biosynthesis.</text>
</comment>
<comment type="catalytic activity">
    <reaction evidence="1">
        <text>2-[(3S)-amino-3-carboxypropyl]-L-histidyl-[translation elongation factor 2] + 3 S-adenosyl-L-methionine = diphthine-[translation elongation factor 2] + 3 S-adenosyl-L-homocysteine + 3 H(+)</text>
        <dbReference type="Rhea" id="RHEA:36415"/>
        <dbReference type="Rhea" id="RHEA-COMP:9749"/>
        <dbReference type="Rhea" id="RHEA-COMP:10172"/>
        <dbReference type="ChEBI" id="CHEBI:15378"/>
        <dbReference type="ChEBI" id="CHEBI:57856"/>
        <dbReference type="ChEBI" id="CHEBI:59789"/>
        <dbReference type="ChEBI" id="CHEBI:73995"/>
        <dbReference type="ChEBI" id="CHEBI:82696"/>
        <dbReference type="EC" id="2.1.1.98"/>
    </reaction>
</comment>
<comment type="pathway">
    <text evidence="1">Protein modification; peptidyl-diphthamide biosynthesis.</text>
</comment>
<comment type="subunit">
    <text evidence="1">Homodimer.</text>
</comment>
<comment type="similarity">
    <text evidence="1">Belongs to the diphthine synthase family.</text>
</comment>
<accession>Q5V2B7</accession>
<feature type="chain" id="PRO_1000064813" description="Diphthine synthase">
    <location>
        <begin position="1"/>
        <end position="259"/>
    </location>
</feature>
<feature type="binding site" evidence="1">
    <location>
        <position position="9"/>
    </location>
    <ligand>
        <name>S-adenosyl-L-methionine</name>
        <dbReference type="ChEBI" id="CHEBI:59789"/>
    </ligand>
</feature>
<feature type="binding site" evidence="1">
    <location>
        <position position="85"/>
    </location>
    <ligand>
        <name>S-adenosyl-L-methionine</name>
        <dbReference type="ChEBI" id="CHEBI:59789"/>
    </ligand>
</feature>
<feature type="binding site" evidence="1">
    <location>
        <position position="88"/>
    </location>
    <ligand>
        <name>S-adenosyl-L-methionine</name>
        <dbReference type="ChEBI" id="CHEBI:59789"/>
    </ligand>
</feature>
<feature type="binding site" evidence="1">
    <location>
        <begin position="113"/>
        <end position="114"/>
    </location>
    <ligand>
        <name>S-adenosyl-L-methionine</name>
        <dbReference type="ChEBI" id="CHEBI:59789"/>
    </ligand>
</feature>
<feature type="binding site" evidence="1">
    <location>
        <position position="168"/>
    </location>
    <ligand>
        <name>S-adenosyl-L-methionine</name>
        <dbReference type="ChEBI" id="CHEBI:59789"/>
    </ligand>
</feature>
<feature type="binding site" evidence="1">
    <location>
        <position position="209"/>
    </location>
    <ligand>
        <name>S-adenosyl-L-methionine</name>
        <dbReference type="ChEBI" id="CHEBI:59789"/>
    </ligand>
</feature>
<feature type="binding site" evidence="1">
    <location>
        <position position="234"/>
    </location>
    <ligand>
        <name>S-adenosyl-L-methionine</name>
        <dbReference type="ChEBI" id="CHEBI:59789"/>
    </ligand>
</feature>
<dbReference type="EC" id="2.1.1.98" evidence="1"/>
<dbReference type="EMBL" id="AY596297">
    <property type="protein sequence ID" value="AAV46335.1"/>
    <property type="molecule type" value="Genomic_DNA"/>
</dbReference>
<dbReference type="RefSeq" id="WP_011223602.1">
    <property type="nucleotide sequence ID" value="NC_006396.1"/>
</dbReference>
<dbReference type="SMR" id="Q5V2B7"/>
<dbReference type="STRING" id="272569.rrnAC1406"/>
<dbReference type="PaxDb" id="272569-rrnAC1406"/>
<dbReference type="EnsemblBacteria" id="AAV46335">
    <property type="protein sequence ID" value="AAV46335"/>
    <property type="gene ID" value="rrnAC1406"/>
</dbReference>
<dbReference type="GeneID" id="40152375"/>
<dbReference type="KEGG" id="hma:rrnAC1406"/>
<dbReference type="PATRIC" id="fig|272569.17.peg.2102"/>
<dbReference type="eggNOG" id="arCOG04161">
    <property type="taxonomic scope" value="Archaea"/>
</dbReference>
<dbReference type="HOGENOM" id="CLU_066040_0_0_2"/>
<dbReference type="UniPathway" id="UPA00559"/>
<dbReference type="Proteomes" id="UP000001169">
    <property type="component" value="Chromosome I"/>
</dbReference>
<dbReference type="GO" id="GO:0004164">
    <property type="term" value="F:diphthine synthase activity"/>
    <property type="evidence" value="ECO:0007669"/>
    <property type="project" value="UniProtKB-UniRule"/>
</dbReference>
<dbReference type="GO" id="GO:0032259">
    <property type="term" value="P:methylation"/>
    <property type="evidence" value="ECO:0007669"/>
    <property type="project" value="UniProtKB-KW"/>
</dbReference>
<dbReference type="GO" id="GO:0017183">
    <property type="term" value="P:protein histidyl modification to diphthamide"/>
    <property type="evidence" value="ECO:0007669"/>
    <property type="project" value="UniProtKB-UniRule"/>
</dbReference>
<dbReference type="CDD" id="cd11647">
    <property type="entry name" value="DHP5_DphB"/>
    <property type="match status" value="1"/>
</dbReference>
<dbReference type="Gene3D" id="3.40.1010.10">
    <property type="entry name" value="Cobalt-precorrin-4 Transmethylase, Domain 1"/>
    <property type="match status" value="1"/>
</dbReference>
<dbReference type="Gene3D" id="3.30.950.10">
    <property type="entry name" value="Methyltransferase, Cobalt-precorrin-4 Transmethylase, Domain 2"/>
    <property type="match status" value="1"/>
</dbReference>
<dbReference type="HAMAP" id="MF_01084">
    <property type="entry name" value="Diphthine_synth"/>
    <property type="match status" value="1"/>
</dbReference>
<dbReference type="InterPro" id="IPR000878">
    <property type="entry name" value="4pyrrol_Mease"/>
</dbReference>
<dbReference type="InterPro" id="IPR035996">
    <property type="entry name" value="4pyrrol_Methylase_sf"/>
</dbReference>
<dbReference type="InterPro" id="IPR014777">
    <property type="entry name" value="4pyrrole_Mease_sub1"/>
</dbReference>
<dbReference type="InterPro" id="IPR014776">
    <property type="entry name" value="4pyrrole_Mease_sub2"/>
</dbReference>
<dbReference type="InterPro" id="IPR004551">
    <property type="entry name" value="Dphthn_synthase"/>
</dbReference>
<dbReference type="NCBIfam" id="TIGR00522">
    <property type="entry name" value="dph5"/>
    <property type="match status" value="1"/>
</dbReference>
<dbReference type="PANTHER" id="PTHR10882:SF0">
    <property type="entry name" value="DIPHTHINE METHYL ESTER SYNTHASE"/>
    <property type="match status" value="1"/>
</dbReference>
<dbReference type="PANTHER" id="PTHR10882">
    <property type="entry name" value="DIPHTHINE SYNTHASE"/>
    <property type="match status" value="1"/>
</dbReference>
<dbReference type="Pfam" id="PF00590">
    <property type="entry name" value="TP_methylase"/>
    <property type="match status" value="1"/>
</dbReference>
<dbReference type="PIRSF" id="PIRSF036432">
    <property type="entry name" value="Diphthine_synth"/>
    <property type="match status" value="1"/>
</dbReference>
<dbReference type="SUPFAM" id="SSF53790">
    <property type="entry name" value="Tetrapyrrole methylase"/>
    <property type="match status" value="1"/>
</dbReference>
<proteinExistence type="inferred from homology"/>
<reference key="1">
    <citation type="journal article" date="2004" name="Genome Res.">
        <title>Genome sequence of Haloarcula marismortui: a halophilic archaeon from the Dead Sea.</title>
        <authorList>
            <person name="Baliga N.S."/>
            <person name="Bonneau R."/>
            <person name="Facciotti M.T."/>
            <person name="Pan M."/>
            <person name="Glusman G."/>
            <person name="Deutsch E.W."/>
            <person name="Shannon P."/>
            <person name="Chiu Y."/>
            <person name="Weng R.S."/>
            <person name="Gan R.R."/>
            <person name="Hung P."/>
            <person name="Date S.V."/>
            <person name="Marcotte E."/>
            <person name="Hood L."/>
            <person name="Ng W.V."/>
        </authorList>
    </citation>
    <scope>NUCLEOTIDE SEQUENCE [LARGE SCALE GENOMIC DNA]</scope>
    <source>
        <strain>ATCC 43049 / DSM 3752 / JCM 8966 / VKM B-1809</strain>
    </source>
</reference>
<organism>
    <name type="scientific">Haloarcula marismortui (strain ATCC 43049 / DSM 3752 / JCM 8966 / VKM B-1809)</name>
    <name type="common">Halobacterium marismortui</name>
    <dbReference type="NCBI Taxonomy" id="272569"/>
    <lineage>
        <taxon>Archaea</taxon>
        <taxon>Methanobacteriati</taxon>
        <taxon>Methanobacteriota</taxon>
        <taxon>Stenosarchaea group</taxon>
        <taxon>Halobacteria</taxon>
        <taxon>Halobacteriales</taxon>
        <taxon>Haloarculaceae</taxon>
        <taxon>Haloarcula</taxon>
    </lineage>
</organism>
<sequence length="259" mass="27938">MLTFVGLGLYDERSVTVAGRDAIRDADRVFAEFYTSRLIGTDIETLEDTLETSIERRDRAGIEQDPEPILEAAESEHVVFCTAGDTMVSTTHADLRLRAADRGIETRIVHGTTAQTAAGSLTGLQNYRFGKATTLPFEDAHGGDGVPDSVVATIEDNRDRDLHTLVYLDIKVDDPHWEESDDTYMTASQAATMLSEPFPDTLGVVVARAGSPDPLVAADTLDELATQTFGDPLHLLVIPGSLHPLEADTLESVAGAALE</sequence>
<keyword id="KW-0489">Methyltransferase</keyword>
<keyword id="KW-1185">Reference proteome</keyword>
<keyword id="KW-0949">S-adenosyl-L-methionine</keyword>
<keyword id="KW-0808">Transferase</keyword>
<name>DPHB_HALMA</name>